<keyword id="KW-0067">ATP-binding</keyword>
<keyword id="KW-0963">Cytoplasm</keyword>
<keyword id="KW-0436">Ligase</keyword>
<keyword id="KW-0547">Nucleotide-binding</keyword>
<keyword id="KW-0658">Purine biosynthesis</keyword>
<proteinExistence type="inferred from homology"/>
<protein>
    <recommendedName>
        <fullName evidence="1">Phosphoribosylformylglycinamidine cyclo-ligase</fullName>
        <ecNumber evidence="1">6.3.3.1</ecNumber>
    </recommendedName>
    <alternativeName>
        <fullName evidence="1">AIR synthase</fullName>
    </alternativeName>
    <alternativeName>
        <fullName evidence="1">AIRS</fullName>
    </alternativeName>
    <alternativeName>
        <fullName evidence="1">Phosphoribosyl-aminoimidazole synthetase</fullName>
    </alternativeName>
</protein>
<evidence type="ECO:0000255" key="1">
    <source>
        <dbReference type="HAMAP-Rule" id="MF_00741"/>
    </source>
</evidence>
<name>PUR5_ACIB3</name>
<sequence length="356" mass="37875">MSNSTSTPNTGLSYKDAGVDIEAGDALVDRIKSVAKRTTRPEVMGGLGGFGALCKIPKGYEEPVLVSGTDGVGTKLRLALNLNRHDTIGQDLVAMCVNDLLVCGAEPLFFLDYYATGHLNVDVAANVVTGIGKGCELAGCALVGGETAEMPGMYEGEDYDLAGFAVGVVEQSKIIDGSKVKSGDVLIGVASSGAHSNGYSLLRKILDVKNVDLTQVIDGRPLADVAMEPTRIYVKPVLELCKQVDVHAMAHITGGGLPGNLPRVLPNGAQAVINEASWEWPELFKLLQREGNVERFEMYRTFNCGVGMVIAVDANDAEKAIEVLNAQGEKAWKIGHIQENAESVEGADEKIRVIFE</sequence>
<feature type="chain" id="PRO_1000192982" description="Phosphoribosylformylglycinamidine cyclo-ligase">
    <location>
        <begin position="1"/>
        <end position="356"/>
    </location>
</feature>
<dbReference type="EC" id="6.3.3.1" evidence="1"/>
<dbReference type="EMBL" id="CP001172">
    <property type="protein sequence ID" value="ACJ58139.1"/>
    <property type="molecule type" value="Genomic_DNA"/>
</dbReference>
<dbReference type="RefSeq" id="WP_000071984.1">
    <property type="nucleotide sequence ID" value="NZ_CP001172.1"/>
</dbReference>
<dbReference type="SMR" id="B7GY98"/>
<dbReference type="GeneID" id="92894879"/>
<dbReference type="HOGENOM" id="CLU_047116_0_0_6"/>
<dbReference type="UniPathway" id="UPA00074">
    <property type="reaction ID" value="UER00129"/>
</dbReference>
<dbReference type="Proteomes" id="UP000006924">
    <property type="component" value="Chromosome"/>
</dbReference>
<dbReference type="GO" id="GO:0005829">
    <property type="term" value="C:cytosol"/>
    <property type="evidence" value="ECO:0007669"/>
    <property type="project" value="TreeGrafter"/>
</dbReference>
<dbReference type="GO" id="GO:0005524">
    <property type="term" value="F:ATP binding"/>
    <property type="evidence" value="ECO:0007669"/>
    <property type="project" value="UniProtKB-KW"/>
</dbReference>
<dbReference type="GO" id="GO:0004637">
    <property type="term" value="F:phosphoribosylamine-glycine ligase activity"/>
    <property type="evidence" value="ECO:0007669"/>
    <property type="project" value="TreeGrafter"/>
</dbReference>
<dbReference type="GO" id="GO:0004641">
    <property type="term" value="F:phosphoribosylformylglycinamidine cyclo-ligase activity"/>
    <property type="evidence" value="ECO:0007669"/>
    <property type="project" value="UniProtKB-UniRule"/>
</dbReference>
<dbReference type="GO" id="GO:0006189">
    <property type="term" value="P:'de novo' IMP biosynthetic process"/>
    <property type="evidence" value="ECO:0007669"/>
    <property type="project" value="UniProtKB-UniRule"/>
</dbReference>
<dbReference type="GO" id="GO:0046084">
    <property type="term" value="P:adenine biosynthetic process"/>
    <property type="evidence" value="ECO:0007669"/>
    <property type="project" value="TreeGrafter"/>
</dbReference>
<dbReference type="CDD" id="cd02196">
    <property type="entry name" value="PurM"/>
    <property type="match status" value="1"/>
</dbReference>
<dbReference type="FunFam" id="3.30.1330.10:FF:000001">
    <property type="entry name" value="Phosphoribosylformylglycinamidine cyclo-ligase"/>
    <property type="match status" value="1"/>
</dbReference>
<dbReference type="FunFam" id="3.90.650.10:FF:000001">
    <property type="entry name" value="Phosphoribosylformylglycinamidine cyclo-ligase"/>
    <property type="match status" value="1"/>
</dbReference>
<dbReference type="Gene3D" id="3.90.650.10">
    <property type="entry name" value="PurM-like C-terminal domain"/>
    <property type="match status" value="1"/>
</dbReference>
<dbReference type="Gene3D" id="3.30.1330.10">
    <property type="entry name" value="PurM-like, N-terminal domain"/>
    <property type="match status" value="1"/>
</dbReference>
<dbReference type="HAMAP" id="MF_00741">
    <property type="entry name" value="AIRS"/>
    <property type="match status" value="1"/>
</dbReference>
<dbReference type="InterPro" id="IPR010918">
    <property type="entry name" value="PurM-like_C_dom"/>
</dbReference>
<dbReference type="InterPro" id="IPR036676">
    <property type="entry name" value="PurM-like_C_sf"/>
</dbReference>
<dbReference type="InterPro" id="IPR016188">
    <property type="entry name" value="PurM-like_N"/>
</dbReference>
<dbReference type="InterPro" id="IPR036921">
    <property type="entry name" value="PurM-like_N_sf"/>
</dbReference>
<dbReference type="InterPro" id="IPR004733">
    <property type="entry name" value="PurM_cligase"/>
</dbReference>
<dbReference type="NCBIfam" id="TIGR00878">
    <property type="entry name" value="purM"/>
    <property type="match status" value="1"/>
</dbReference>
<dbReference type="PANTHER" id="PTHR10520:SF12">
    <property type="entry name" value="TRIFUNCTIONAL PURINE BIOSYNTHETIC PROTEIN ADENOSINE-3"/>
    <property type="match status" value="1"/>
</dbReference>
<dbReference type="PANTHER" id="PTHR10520">
    <property type="entry name" value="TRIFUNCTIONAL PURINE BIOSYNTHETIC PROTEIN ADENOSINE-3-RELATED"/>
    <property type="match status" value="1"/>
</dbReference>
<dbReference type="Pfam" id="PF00586">
    <property type="entry name" value="AIRS"/>
    <property type="match status" value="1"/>
</dbReference>
<dbReference type="Pfam" id="PF02769">
    <property type="entry name" value="AIRS_C"/>
    <property type="match status" value="1"/>
</dbReference>
<dbReference type="SUPFAM" id="SSF56042">
    <property type="entry name" value="PurM C-terminal domain-like"/>
    <property type="match status" value="1"/>
</dbReference>
<dbReference type="SUPFAM" id="SSF55326">
    <property type="entry name" value="PurM N-terminal domain-like"/>
    <property type="match status" value="1"/>
</dbReference>
<organism>
    <name type="scientific">Acinetobacter baumannii (strain AB307-0294)</name>
    <dbReference type="NCBI Taxonomy" id="557600"/>
    <lineage>
        <taxon>Bacteria</taxon>
        <taxon>Pseudomonadati</taxon>
        <taxon>Pseudomonadota</taxon>
        <taxon>Gammaproteobacteria</taxon>
        <taxon>Moraxellales</taxon>
        <taxon>Moraxellaceae</taxon>
        <taxon>Acinetobacter</taxon>
        <taxon>Acinetobacter calcoaceticus/baumannii complex</taxon>
    </lineage>
</organism>
<reference key="1">
    <citation type="journal article" date="2008" name="J. Bacteriol.">
        <title>Comparative genome sequence analysis of multidrug-resistant Acinetobacter baumannii.</title>
        <authorList>
            <person name="Adams M.D."/>
            <person name="Goglin K."/>
            <person name="Molyneaux N."/>
            <person name="Hujer K.M."/>
            <person name="Lavender H."/>
            <person name="Jamison J.J."/>
            <person name="MacDonald I.J."/>
            <person name="Martin K.M."/>
            <person name="Russo T."/>
            <person name="Campagnari A.A."/>
            <person name="Hujer A.M."/>
            <person name="Bonomo R.A."/>
            <person name="Gill S.R."/>
        </authorList>
    </citation>
    <scope>NUCLEOTIDE SEQUENCE [LARGE SCALE GENOMIC DNA]</scope>
    <source>
        <strain>AB307-0294</strain>
    </source>
</reference>
<gene>
    <name evidence="1" type="primary">purM</name>
    <name type="ordered locus">ABBFA_000875</name>
</gene>
<comment type="catalytic activity">
    <reaction evidence="1">
        <text>2-formamido-N(1)-(5-O-phospho-beta-D-ribosyl)acetamidine + ATP = 5-amino-1-(5-phospho-beta-D-ribosyl)imidazole + ADP + phosphate + H(+)</text>
        <dbReference type="Rhea" id="RHEA:23032"/>
        <dbReference type="ChEBI" id="CHEBI:15378"/>
        <dbReference type="ChEBI" id="CHEBI:30616"/>
        <dbReference type="ChEBI" id="CHEBI:43474"/>
        <dbReference type="ChEBI" id="CHEBI:137981"/>
        <dbReference type="ChEBI" id="CHEBI:147287"/>
        <dbReference type="ChEBI" id="CHEBI:456216"/>
        <dbReference type="EC" id="6.3.3.1"/>
    </reaction>
</comment>
<comment type="pathway">
    <text evidence="1">Purine metabolism; IMP biosynthesis via de novo pathway; 5-amino-1-(5-phospho-D-ribosyl)imidazole from N(2)-formyl-N(1)-(5-phospho-D-ribosyl)glycinamide: step 2/2.</text>
</comment>
<comment type="subcellular location">
    <subcellularLocation>
        <location evidence="1">Cytoplasm</location>
    </subcellularLocation>
</comment>
<comment type="similarity">
    <text evidence="1">Belongs to the AIR synthase family.</text>
</comment>
<accession>B7GY98</accession>